<dbReference type="EC" id="3.1.1.72"/>
<dbReference type="EMBL" id="AM921700">
    <property type="protein sequence ID" value="CAP53943.1"/>
    <property type="molecule type" value="Genomic_DNA"/>
</dbReference>
<dbReference type="SMR" id="A9JPE6"/>
<dbReference type="ESTHER" id="aspor-axe1">
    <property type="family name" value="Esterase_phb"/>
</dbReference>
<dbReference type="GlyCosmos" id="A9JPE6">
    <property type="glycosylation" value="2 sites, No reported glycans"/>
</dbReference>
<dbReference type="VEuPathDB" id="FungiDB:AFLA_008143"/>
<dbReference type="VEuPathDB" id="FungiDB:F9C07_2281031"/>
<dbReference type="UniPathway" id="UPA00114"/>
<dbReference type="GO" id="GO:0005576">
    <property type="term" value="C:extracellular region"/>
    <property type="evidence" value="ECO:0007669"/>
    <property type="project" value="UniProtKB-SubCell"/>
</dbReference>
<dbReference type="GO" id="GO:0046555">
    <property type="term" value="F:acetylxylan esterase activity"/>
    <property type="evidence" value="ECO:0007669"/>
    <property type="project" value="UniProtKB-EC"/>
</dbReference>
<dbReference type="GO" id="GO:0030245">
    <property type="term" value="P:cellulose catabolic process"/>
    <property type="evidence" value="ECO:0007669"/>
    <property type="project" value="UniProtKB-KW"/>
</dbReference>
<dbReference type="GO" id="GO:0045493">
    <property type="term" value="P:xylan catabolic process"/>
    <property type="evidence" value="ECO:0007669"/>
    <property type="project" value="UniProtKB-UniPathway"/>
</dbReference>
<dbReference type="FunFam" id="3.40.50.1820:FF:000203">
    <property type="entry name" value="Feruloyl esterase B"/>
    <property type="match status" value="1"/>
</dbReference>
<dbReference type="Gene3D" id="3.40.50.1820">
    <property type="entry name" value="alpha/beta hydrolase"/>
    <property type="match status" value="1"/>
</dbReference>
<dbReference type="InterPro" id="IPR029058">
    <property type="entry name" value="AB_hydrolase_fold"/>
</dbReference>
<dbReference type="InterPro" id="IPR010126">
    <property type="entry name" value="Esterase_phb"/>
</dbReference>
<dbReference type="InterPro" id="IPR050955">
    <property type="entry name" value="Plant_Biomass_Hydrol_Est"/>
</dbReference>
<dbReference type="NCBIfam" id="TIGR01840">
    <property type="entry name" value="esterase_phb"/>
    <property type="match status" value="1"/>
</dbReference>
<dbReference type="PANTHER" id="PTHR43037:SF5">
    <property type="entry name" value="FERULOYL ESTERASE"/>
    <property type="match status" value="1"/>
</dbReference>
<dbReference type="PANTHER" id="PTHR43037">
    <property type="entry name" value="UNNAMED PRODUCT-RELATED"/>
    <property type="match status" value="1"/>
</dbReference>
<dbReference type="Pfam" id="PF10503">
    <property type="entry name" value="Esterase_PHB"/>
    <property type="match status" value="1"/>
</dbReference>
<dbReference type="SUPFAM" id="SSF53474">
    <property type="entry name" value="alpha/beta-Hydrolases"/>
    <property type="match status" value="2"/>
</dbReference>
<reference key="1">
    <citation type="journal article" date="2009" name="Appl. Environ. Microbiol.">
        <title>Identification of two aflatrem biosynthesis gene loci in Aspergillus flavus and metabolic engineering of Penicillium paxilli to elucidate their function.</title>
        <authorList>
            <person name="Nicholson M.J."/>
            <person name="Koulman A."/>
            <person name="Monahan B.J."/>
            <person name="Pritchard B.L."/>
            <person name="Payne G.A."/>
            <person name="Scott B."/>
        </authorList>
    </citation>
    <scope>NUCLEOTIDE SEQUENCE [GENOMIC DNA]</scope>
    <source>
        <strain>NRRL 6541</strain>
    </source>
</reference>
<evidence type="ECO:0000250" key="1"/>
<evidence type="ECO:0000255" key="2"/>
<evidence type="ECO:0000305" key="3"/>
<feature type="signal peptide" evidence="2">
    <location>
        <begin position="1"/>
        <end position="19"/>
    </location>
</feature>
<feature type="chain" id="PRO_0000393477" description="Probable acetylxylan esterase A">
    <location>
        <begin position="20"/>
        <end position="307"/>
    </location>
</feature>
<feature type="active site" description="Charge relay system" evidence="1">
    <location>
        <position position="150"/>
    </location>
</feature>
<feature type="glycosylation site" description="N-linked (GlcNAc...) asparagine" evidence="2">
    <location>
        <position position="192"/>
    </location>
</feature>
<feature type="glycosylation site" description="N-linked (GlcNAc...) asparagine" evidence="2">
    <location>
        <position position="270"/>
    </location>
</feature>
<organism>
    <name type="scientific">Aspergillus flavus</name>
    <dbReference type="NCBI Taxonomy" id="5059"/>
    <lineage>
        <taxon>Eukaryota</taxon>
        <taxon>Fungi</taxon>
        <taxon>Dikarya</taxon>
        <taxon>Ascomycota</taxon>
        <taxon>Pezizomycotina</taxon>
        <taxon>Eurotiomycetes</taxon>
        <taxon>Eurotiomycetidae</taxon>
        <taxon>Eurotiales</taxon>
        <taxon>Aspergillaceae</taxon>
        <taxon>Aspergillus</taxon>
        <taxon>Aspergillus subgen. Circumdati</taxon>
    </lineage>
</organism>
<comment type="function">
    <text evidence="1">Acetylxylan esterase involved in the hydrolysis of xylan, a major structural heterogeneous polysaccharide found in plant biomass representing the second most abundant polysaccharide in the biosphere, after cellulose. Degrades acetylated xylans by cleaving acetyl side groups from the hetero-xylan backbone (By similarity).</text>
</comment>
<comment type="catalytic activity">
    <reaction>
        <text>Deacetylation of xylans and xylo-oligosaccharides.</text>
        <dbReference type="EC" id="3.1.1.72"/>
    </reaction>
</comment>
<comment type="pathway">
    <text>Glycan degradation; xylan degradation.</text>
</comment>
<comment type="subunit">
    <text evidence="1">Monomer.</text>
</comment>
<comment type="subcellular location">
    <subcellularLocation>
        <location evidence="1">Secreted</location>
    </subcellularLocation>
</comment>
<comment type="similarity">
    <text evidence="3">Belongs to the carbohydrate esterase 1 (CE1) family. AxeA subfamily.</text>
</comment>
<comment type="caution">
    <text evidence="3">The C-terminal carbohydrate-binding module (CBM) extension found in some acetylxylan esterases from other species is absent.</text>
</comment>
<sequence length="307" mass="33286">MILLSYLLTYLLCALTCSARAIHNGRSLIPRAGSLEQVTDFGDNPSNVKMYIYVPTNLASNPGIIVAIHYCTGTAQAYYQGSPYAQLAETHGFIVIYPESPYEGTCWDVSSQATLTHNGGGNSNSIANMVTWTTKQYNADSSKVFVTGTSSGAMMTNVMAATYPNLFAAGVAYAGVPAGCFLSTADQPDAWNSTCAQGQSITTPEHWASIAEAMYPDYSGSRPKMQIYHGNVDTTLYPQNYEETCKQWAGVFGYNYDAPESTESNTPEANWSRTTWGPNLQGILAGGVGHNIQIHGDEDMKWFGFTN</sequence>
<keyword id="KW-0119">Carbohydrate metabolism</keyword>
<keyword id="KW-0136">Cellulose degradation</keyword>
<keyword id="KW-0325">Glycoprotein</keyword>
<keyword id="KW-0378">Hydrolase</keyword>
<keyword id="KW-0624">Polysaccharide degradation</keyword>
<keyword id="KW-0964">Secreted</keyword>
<keyword id="KW-0719">Serine esterase</keyword>
<keyword id="KW-0732">Signal</keyword>
<accession>A9JPE6</accession>
<gene>
    <name type="primary">axeA</name>
    <name type="synonym">aceA</name>
</gene>
<proteinExistence type="inferred from homology"/>
<protein>
    <recommendedName>
        <fullName>Probable acetylxylan esterase A</fullName>
        <ecNumber>3.1.1.72</ecNumber>
    </recommendedName>
</protein>
<name>AXE1_ASPFL</name>